<comment type="subcellular location">
    <subcellularLocation>
        <location evidence="1">Secreted</location>
    </subcellularLocation>
</comment>
<comment type="tissue specificity">
    <text>Expressed by the venom gland.</text>
</comment>
<comment type="similarity">
    <text evidence="4">Belongs to the AVIT (prokineticin) family.</text>
</comment>
<protein>
    <recommendedName>
        <fullName>U8-theraphotoxin-Hhn1c 3</fullName>
        <shortName>U8-TRTX-Hhn1c 3</shortName>
    </recommendedName>
    <alternativeName>
        <fullName evidence="5">Hainantoxin-XIV-3.3</fullName>
        <shortName evidence="5">HNTX-XIV-3.3</shortName>
    </alternativeName>
</protein>
<feature type="signal peptide" evidence="3">
    <location>
        <begin position="1"/>
        <end position="21"/>
    </location>
</feature>
<feature type="chain" id="PRO_0000400851" description="U8-theraphotoxin-Hhn1c 3">
    <location>
        <begin position="22"/>
        <end position="84"/>
    </location>
</feature>
<feature type="disulfide bond" evidence="2">
    <location>
        <begin position="23"/>
        <end position="35"/>
    </location>
</feature>
<feature type="disulfide bond" evidence="2">
    <location>
        <begin position="29"/>
        <end position="44"/>
    </location>
</feature>
<feature type="disulfide bond" evidence="2">
    <location>
        <begin position="34"/>
        <end position="67"/>
    </location>
</feature>
<feature type="disulfide bond" evidence="2">
    <location>
        <begin position="54"/>
        <end position="75"/>
    </location>
</feature>
<feature type="disulfide bond" evidence="2">
    <location>
        <begin position="69"/>
        <end position="81"/>
    </location>
</feature>
<name>H14C3_CYRHA</name>
<proteinExistence type="evidence at transcript level"/>
<evidence type="ECO:0000250" key="1"/>
<evidence type="ECO:0000250" key="2">
    <source>
        <dbReference type="UniProtKB" id="Q9PW66"/>
    </source>
</evidence>
<evidence type="ECO:0000255" key="3"/>
<evidence type="ECO:0000305" key="4"/>
<evidence type="ECO:0000312" key="5">
    <source>
        <dbReference type="EMBL" id="ADB56836.1"/>
    </source>
</evidence>
<sequence length="84" mass="9248">MKVALIVCLVWVMAMMELVSCECWSQADCSDGHCCAGSSFSKNCRPYGGDGEQCEPRNKYEVYSTGCPCEENLMCSVINRCQSA</sequence>
<reference key="1">
    <citation type="journal article" date="2010" name="J. Proteome Res.">
        <title>Molecular diversification of peptide toxins from the tarantula Haplopelma hainanum (Ornithoctonus hainana) venom based on transcriptomic, peptidomic, and genomic analyses.</title>
        <authorList>
            <person name="Tang X."/>
            <person name="Zhang Y."/>
            <person name="Hu W."/>
            <person name="Xu D."/>
            <person name="Tao H."/>
            <person name="Yang X."/>
            <person name="Li Y."/>
            <person name="Jiang L."/>
            <person name="Liang S."/>
        </authorList>
    </citation>
    <scope>NUCLEOTIDE SEQUENCE [LARGE SCALE MRNA]</scope>
    <source>
        <tissue>Venom gland</tissue>
    </source>
</reference>
<keyword id="KW-1015">Disulfide bond</keyword>
<keyword id="KW-0964">Secreted</keyword>
<keyword id="KW-0732">Signal</keyword>
<keyword id="KW-0800">Toxin</keyword>
<organism>
    <name type="scientific">Cyriopagopus hainanus</name>
    <name type="common">Chinese bird spider</name>
    <name type="synonym">Haplopelma hainanum</name>
    <dbReference type="NCBI Taxonomy" id="209901"/>
    <lineage>
        <taxon>Eukaryota</taxon>
        <taxon>Metazoa</taxon>
        <taxon>Ecdysozoa</taxon>
        <taxon>Arthropoda</taxon>
        <taxon>Chelicerata</taxon>
        <taxon>Arachnida</taxon>
        <taxon>Araneae</taxon>
        <taxon>Mygalomorphae</taxon>
        <taxon>Theraphosidae</taxon>
        <taxon>Haplopelma</taxon>
    </lineage>
</organism>
<accession>D2Y2E3</accession>
<dbReference type="EMBL" id="GU293020">
    <property type="protein sequence ID" value="ADB56836.1"/>
    <property type="molecule type" value="mRNA"/>
</dbReference>
<dbReference type="SMR" id="D2Y2E3"/>
<dbReference type="ArachnoServer" id="AS001663">
    <property type="toxin name" value="U8-theraphotoxin-Hhn1c"/>
</dbReference>
<dbReference type="GO" id="GO:0005576">
    <property type="term" value="C:extracellular region"/>
    <property type="evidence" value="ECO:0007669"/>
    <property type="project" value="UniProtKB-SubCell"/>
</dbReference>
<dbReference type="GO" id="GO:0090729">
    <property type="term" value="F:toxin activity"/>
    <property type="evidence" value="ECO:0007669"/>
    <property type="project" value="UniProtKB-KW"/>
</dbReference>
<dbReference type="Gene3D" id="2.10.80.10">
    <property type="entry name" value="Lipase, subunit A"/>
    <property type="match status" value="1"/>
</dbReference>
<dbReference type="InterPro" id="IPR023569">
    <property type="entry name" value="Prokineticin_domain"/>
</dbReference>
<dbReference type="Pfam" id="PF06607">
    <property type="entry name" value="Prokineticin"/>
    <property type="match status" value="1"/>
</dbReference>